<sequence>MGFYMLLTVALLLTSLMNVEATPVDQAERSALEKSGLGNRIQPRYDNCGDAEADCYQSKCMDEETYDEECEASCNYVVANCISD</sequence>
<accession>D5KXH6</accession>
<accession>D5KXG4</accession>
<keyword id="KW-1015">Disulfide bond</keyword>
<keyword id="KW-0528">Neurotoxin</keyword>
<keyword id="KW-0964">Secreted</keyword>
<keyword id="KW-0732">Signal</keyword>
<keyword id="KW-0800">Toxin</keyword>
<organism>
    <name type="scientific">Gemmula speciosa</name>
    <name type="common">Splendid gem-turris</name>
    <name type="synonym">Pleurotoma speciosa</name>
    <dbReference type="NCBI Taxonomy" id="439592"/>
    <lineage>
        <taxon>Eukaryota</taxon>
        <taxon>Metazoa</taxon>
        <taxon>Spiralia</taxon>
        <taxon>Lophotrochozoa</taxon>
        <taxon>Mollusca</taxon>
        <taxon>Gastropoda</taxon>
        <taxon>Caenogastropoda</taxon>
        <taxon>Neogastropoda</taxon>
        <taxon>Conoidea</taxon>
        <taxon>Turridae</taxon>
        <taxon>Gemmula</taxon>
    </lineage>
</organism>
<reference key="1">
    <citation type="submission" date="2010-02" db="EMBL/GenBank/DDBJ databases">
        <title>Cysteine-rich toxin gene families from Gemmula speciosa (Reeve, 1843).</title>
        <authorList>
            <person name="Uichanco J.A.V."/>
            <person name="Planta J.R.G."/>
            <person name="Santos A.D."/>
            <person name="Concepcion G.P."/>
        </authorList>
    </citation>
    <scope>NUCLEOTIDE SEQUENCE [MRNA]</scope>
    <source>
        <tissue>Venom duct</tissue>
    </source>
</reference>
<feature type="signal peptide" evidence="2">
    <location>
        <begin position="1"/>
        <end position="21"/>
    </location>
</feature>
<feature type="propeptide" id="PRO_0000415065" evidence="1">
    <location>
        <begin position="22"/>
        <end position="39"/>
    </location>
</feature>
<feature type="peptide" id="PRO_0000415066" description="Turripeptide IX-03">
    <location>
        <begin position="41"/>
        <end position="84"/>
    </location>
</feature>
<feature type="peptide" id="PRO_0000415067" description="Turripeptide IX-02">
    <location>
        <begin position="41"/>
        <end position="82"/>
    </location>
</feature>
<feature type="disulfide bond" evidence="1">
    <location>
        <begin position="48"/>
        <end position="70"/>
    </location>
</feature>
<feature type="disulfide bond" evidence="1">
    <location>
        <begin position="55"/>
        <end position="74"/>
    </location>
</feature>
<feature type="disulfide bond" evidence="1">
    <location>
        <begin position="60"/>
        <end position="81"/>
    </location>
</feature>
<name>TU92_GEMSP</name>
<comment type="subcellular location">
    <subcellularLocation>
        <location evidence="1">Secreted</location>
    </subcellularLocation>
</comment>
<comment type="tissue specificity">
    <text>Expressed by the venom duct.</text>
</comment>
<comment type="domain">
    <text>The cysteine framework is IX (C-C-C-C-C-C).</text>
</comment>
<dbReference type="EMBL" id="GU721057">
    <property type="protein sequence ID" value="ADE28874.1"/>
    <property type="molecule type" value="mRNA"/>
</dbReference>
<dbReference type="EMBL" id="GU721045">
    <property type="protein sequence ID" value="ADE28862.1"/>
    <property type="molecule type" value="mRNA"/>
</dbReference>
<dbReference type="GO" id="GO:0005576">
    <property type="term" value="C:extracellular region"/>
    <property type="evidence" value="ECO:0007669"/>
    <property type="project" value="UniProtKB-SubCell"/>
</dbReference>
<dbReference type="GO" id="GO:0090729">
    <property type="term" value="F:toxin activity"/>
    <property type="evidence" value="ECO:0007669"/>
    <property type="project" value="UniProtKB-KW"/>
</dbReference>
<proteinExistence type="evidence at transcript level"/>
<protein>
    <recommendedName>
        <fullName>Turripeptide IX-03</fullName>
    </recommendedName>
    <component>
        <recommendedName>
            <fullName>Turripeptide IX-02</fullName>
        </recommendedName>
    </component>
</protein>
<evidence type="ECO:0000250" key="1"/>
<evidence type="ECO:0000255" key="2"/>